<name>DAPB_GLUDA</name>
<accession>A9HE99</accession>
<accession>B5ZCS3</accession>
<protein>
    <recommendedName>
        <fullName evidence="1">4-hydroxy-tetrahydrodipicolinate reductase</fullName>
        <shortName evidence="1">HTPA reductase</shortName>
        <ecNumber evidence="1">1.17.1.8</ecNumber>
    </recommendedName>
</protein>
<dbReference type="EC" id="1.17.1.8" evidence="1"/>
<dbReference type="EMBL" id="AM889285">
    <property type="protein sequence ID" value="CAP55203.1"/>
    <property type="molecule type" value="Genomic_DNA"/>
</dbReference>
<dbReference type="EMBL" id="CP001189">
    <property type="protein sequence ID" value="ACI51731.1"/>
    <property type="molecule type" value="Genomic_DNA"/>
</dbReference>
<dbReference type="RefSeq" id="WP_012224429.1">
    <property type="nucleotide sequence ID" value="NC_010125.1"/>
</dbReference>
<dbReference type="SMR" id="A9HE99"/>
<dbReference type="STRING" id="272568.GDI1260"/>
<dbReference type="KEGG" id="gdi:GDI1260"/>
<dbReference type="KEGG" id="gdj:Gdia_1971"/>
<dbReference type="eggNOG" id="COG0289">
    <property type="taxonomic scope" value="Bacteria"/>
</dbReference>
<dbReference type="HOGENOM" id="CLU_047479_2_2_5"/>
<dbReference type="OrthoDB" id="9790352at2"/>
<dbReference type="UniPathway" id="UPA00034">
    <property type="reaction ID" value="UER00018"/>
</dbReference>
<dbReference type="Proteomes" id="UP000001176">
    <property type="component" value="Chromosome"/>
</dbReference>
<dbReference type="GO" id="GO:0005737">
    <property type="term" value="C:cytoplasm"/>
    <property type="evidence" value="ECO:0007669"/>
    <property type="project" value="UniProtKB-SubCell"/>
</dbReference>
<dbReference type="GO" id="GO:0008839">
    <property type="term" value="F:4-hydroxy-tetrahydrodipicolinate reductase"/>
    <property type="evidence" value="ECO:0007669"/>
    <property type="project" value="UniProtKB-EC"/>
</dbReference>
<dbReference type="GO" id="GO:0051287">
    <property type="term" value="F:NAD binding"/>
    <property type="evidence" value="ECO:0007669"/>
    <property type="project" value="UniProtKB-UniRule"/>
</dbReference>
<dbReference type="GO" id="GO:0050661">
    <property type="term" value="F:NADP binding"/>
    <property type="evidence" value="ECO:0007669"/>
    <property type="project" value="UniProtKB-UniRule"/>
</dbReference>
<dbReference type="GO" id="GO:0016726">
    <property type="term" value="F:oxidoreductase activity, acting on CH or CH2 groups, NAD or NADP as acceptor"/>
    <property type="evidence" value="ECO:0007669"/>
    <property type="project" value="UniProtKB-UniRule"/>
</dbReference>
<dbReference type="GO" id="GO:0019877">
    <property type="term" value="P:diaminopimelate biosynthetic process"/>
    <property type="evidence" value="ECO:0007669"/>
    <property type="project" value="UniProtKB-UniRule"/>
</dbReference>
<dbReference type="GO" id="GO:0009089">
    <property type="term" value="P:lysine biosynthetic process via diaminopimelate"/>
    <property type="evidence" value="ECO:0007669"/>
    <property type="project" value="UniProtKB-UniRule"/>
</dbReference>
<dbReference type="CDD" id="cd02274">
    <property type="entry name" value="DHDPR_N"/>
    <property type="match status" value="1"/>
</dbReference>
<dbReference type="Gene3D" id="3.30.360.10">
    <property type="entry name" value="Dihydrodipicolinate Reductase, domain 2"/>
    <property type="match status" value="1"/>
</dbReference>
<dbReference type="Gene3D" id="3.40.50.720">
    <property type="entry name" value="NAD(P)-binding Rossmann-like Domain"/>
    <property type="match status" value="1"/>
</dbReference>
<dbReference type="HAMAP" id="MF_00102">
    <property type="entry name" value="DapB"/>
    <property type="match status" value="1"/>
</dbReference>
<dbReference type="InterPro" id="IPR022663">
    <property type="entry name" value="DapB_C"/>
</dbReference>
<dbReference type="InterPro" id="IPR000846">
    <property type="entry name" value="DapB_N"/>
</dbReference>
<dbReference type="InterPro" id="IPR022664">
    <property type="entry name" value="DapB_N_CS"/>
</dbReference>
<dbReference type="InterPro" id="IPR023940">
    <property type="entry name" value="DHDPR_bac"/>
</dbReference>
<dbReference type="InterPro" id="IPR036291">
    <property type="entry name" value="NAD(P)-bd_dom_sf"/>
</dbReference>
<dbReference type="NCBIfam" id="TIGR00036">
    <property type="entry name" value="dapB"/>
    <property type="match status" value="1"/>
</dbReference>
<dbReference type="PANTHER" id="PTHR20836:SF0">
    <property type="entry name" value="4-HYDROXY-TETRAHYDRODIPICOLINATE REDUCTASE 1, CHLOROPLASTIC-RELATED"/>
    <property type="match status" value="1"/>
</dbReference>
<dbReference type="PANTHER" id="PTHR20836">
    <property type="entry name" value="DIHYDRODIPICOLINATE REDUCTASE"/>
    <property type="match status" value="1"/>
</dbReference>
<dbReference type="Pfam" id="PF05173">
    <property type="entry name" value="DapB_C"/>
    <property type="match status" value="1"/>
</dbReference>
<dbReference type="Pfam" id="PF01113">
    <property type="entry name" value="DapB_N"/>
    <property type="match status" value="1"/>
</dbReference>
<dbReference type="PIRSF" id="PIRSF000161">
    <property type="entry name" value="DHPR"/>
    <property type="match status" value="1"/>
</dbReference>
<dbReference type="SUPFAM" id="SSF55347">
    <property type="entry name" value="Glyceraldehyde-3-phosphate dehydrogenase-like, C-terminal domain"/>
    <property type="match status" value="1"/>
</dbReference>
<dbReference type="SUPFAM" id="SSF51735">
    <property type="entry name" value="NAD(P)-binding Rossmann-fold domains"/>
    <property type="match status" value="1"/>
</dbReference>
<dbReference type="PROSITE" id="PS01298">
    <property type="entry name" value="DAPB"/>
    <property type="match status" value="1"/>
</dbReference>
<feature type="chain" id="PRO_1000075680" description="4-hydroxy-tetrahydrodipicolinate reductase">
    <location>
        <begin position="1"/>
        <end position="256"/>
    </location>
</feature>
<feature type="active site" description="Proton donor/acceptor" evidence="1">
    <location>
        <position position="144"/>
    </location>
</feature>
<feature type="active site" description="Proton donor" evidence="1">
    <location>
        <position position="148"/>
    </location>
</feature>
<feature type="binding site" evidence="1">
    <location>
        <begin position="12"/>
        <end position="17"/>
    </location>
    <ligand>
        <name>NAD(+)</name>
        <dbReference type="ChEBI" id="CHEBI:57540"/>
    </ligand>
</feature>
<feature type="binding site" evidence="1">
    <location>
        <position position="39"/>
    </location>
    <ligand>
        <name>NAD(+)</name>
        <dbReference type="ChEBI" id="CHEBI:57540"/>
    </ligand>
</feature>
<feature type="binding site" evidence="1">
    <location>
        <begin position="86"/>
        <end position="88"/>
    </location>
    <ligand>
        <name>NAD(+)</name>
        <dbReference type="ChEBI" id="CHEBI:57540"/>
    </ligand>
</feature>
<feature type="binding site" evidence="1">
    <location>
        <begin position="110"/>
        <end position="113"/>
    </location>
    <ligand>
        <name>NAD(+)</name>
        <dbReference type="ChEBI" id="CHEBI:57540"/>
    </ligand>
</feature>
<feature type="binding site" evidence="1">
    <location>
        <position position="145"/>
    </location>
    <ligand>
        <name>(S)-2,3,4,5-tetrahydrodipicolinate</name>
        <dbReference type="ChEBI" id="CHEBI:16845"/>
    </ligand>
</feature>
<feature type="binding site" evidence="1">
    <location>
        <begin position="154"/>
        <end position="155"/>
    </location>
    <ligand>
        <name>(S)-2,3,4,5-tetrahydrodipicolinate</name>
        <dbReference type="ChEBI" id="CHEBI:16845"/>
    </ligand>
</feature>
<evidence type="ECO:0000255" key="1">
    <source>
        <dbReference type="HAMAP-Rule" id="MF_00102"/>
    </source>
</evidence>
<evidence type="ECO:0000305" key="2"/>
<keyword id="KW-0028">Amino-acid biosynthesis</keyword>
<keyword id="KW-0963">Cytoplasm</keyword>
<keyword id="KW-0220">Diaminopimelate biosynthesis</keyword>
<keyword id="KW-0457">Lysine biosynthesis</keyword>
<keyword id="KW-0520">NAD</keyword>
<keyword id="KW-0521">NADP</keyword>
<keyword id="KW-0560">Oxidoreductase</keyword>
<keyword id="KW-1185">Reference proteome</keyword>
<proteinExistence type="inferred from homology"/>
<organism>
    <name type="scientific">Gluconacetobacter diazotrophicus (strain ATCC 49037 / DSM 5601 / CCUG 37298 / CIP 103539 / LMG 7603 / PAl5)</name>
    <dbReference type="NCBI Taxonomy" id="272568"/>
    <lineage>
        <taxon>Bacteria</taxon>
        <taxon>Pseudomonadati</taxon>
        <taxon>Pseudomonadota</taxon>
        <taxon>Alphaproteobacteria</taxon>
        <taxon>Acetobacterales</taxon>
        <taxon>Acetobacteraceae</taxon>
        <taxon>Gluconacetobacter</taxon>
    </lineage>
</organism>
<sequence>MTTQGVRIGIAGINGRVGRLLREEVTTGGGILSGGTARDAAPASDVFATLDALAPRCDVVIDFTHAATVRTHADILARAGVAWVLGTTGLSAADLEAVRTAAGRIPVVHAANYSPGVTLVTRLARQMAAALPSATYDAEILEMHHRQKVDAPSGTALAIGQAVADGRGIDLASHIEDGRTGHTGPRRADAIGFAVLRGGQIVGEHTVSFTSATEQIALTHRSFDRRIYATGAVRAALWLRGQASGLYDMEDVLGLD</sequence>
<gene>
    <name evidence="1" type="primary">dapB</name>
    <name type="ordered locus">GDI1260</name>
    <name type="ordered locus">Gdia_1971</name>
</gene>
<comment type="function">
    <text evidence="1">Catalyzes the conversion of 4-hydroxy-tetrahydrodipicolinate (HTPA) to tetrahydrodipicolinate.</text>
</comment>
<comment type="catalytic activity">
    <reaction evidence="1">
        <text>(S)-2,3,4,5-tetrahydrodipicolinate + NAD(+) + H2O = (2S,4S)-4-hydroxy-2,3,4,5-tetrahydrodipicolinate + NADH + H(+)</text>
        <dbReference type="Rhea" id="RHEA:35323"/>
        <dbReference type="ChEBI" id="CHEBI:15377"/>
        <dbReference type="ChEBI" id="CHEBI:15378"/>
        <dbReference type="ChEBI" id="CHEBI:16845"/>
        <dbReference type="ChEBI" id="CHEBI:57540"/>
        <dbReference type="ChEBI" id="CHEBI:57945"/>
        <dbReference type="ChEBI" id="CHEBI:67139"/>
        <dbReference type="EC" id="1.17.1.8"/>
    </reaction>
</comment>
<comment type="catalytic activity">
    <reaction evidence="1">
        <text>(S)-2,3,4,5-tetrahydrodipicolinate + NADP(+) + H2O = (2S,4S)-4-hydroxy-2,3,4,5-tetrahydrodipicolinate + NADPH + H(+)</text>
        <dbReference type="Rhea" id="RHEA:35331"/>
        <dbReference type="ChEBI" id="CHEBI:15377"/>
        <dbReference type="ChEBI" id="CHEBI:15378"/>
        <dbReference type="ChEBI" id="CHEBI:16845"/>
        <dbReference type="ChEBI" id="CHEBI:57783"/>
        <dbReference type="ChEBI" id="CHEBI:58349"/>
        <dbReference type="ChEBI" id="CHEBI:67139"/>
        <dbReference type="EC" id="1.17.1.8"/>
    </reaction>
</comment>
<comment type="pathway">
    <text evidence="1">Amino-acid biosynthesis; L-lysine biosynthesis via DAP pathway; (S)-tetrahydrodipicolinate from L-aspartate: step 4/4.</text>
</comment>
<comment type="subcellular location">
    <subcellularLocation>
        <location evidence="1">Cytoplasm</location>
    </subcellularLocation>
</comment>
<comment type="similarity">
    <text evidence="1">Belongs to the DapB family.</text>
</comment>
<comment type="caution">
    <text evidence="2">Was originally thought to be a dihydrodipicolinate reductase (DHDPR), catalyzing the conversion of dihydrodipicolinate to tetrahydrodipicolinate. However, it was shown in E.coli that the substrate of the enzymatic reaction is not dihydrodipicolinate (DHDP) but in fact (2S,4S)-4-hydroxy-2,3,4,5-tetrahydrodipicolinic acid (HTPA), the product released by the DapA-catalyzed reaction.</text>
</comment>
<reference key="1">
    <citation type="journal article" date="2009" name="BMC Genomics">
        <title>Complete genome sequence of the sugarcane nitrogen-fixing endophyte Gluconacetobacter diazotrophicus Pal5.</title>
        <authorList>
            <person name="Bertalan M."/>
            <person name="Albano R."/>
            <person name="de Padua V."/>
            <person name="Rouws L."/>
            <person name="Rojas C."/>
            <person name="Hemerly A."/>
            <person name="Teixeira K."/>
            <person name="Schwab S."/>
            <person name="Araujo J."/>
            <person name="Oliveira A."/>
            <person name="Franca L."/>
            <person name="Magalhaes V."/>
            <person name="Alqueres S."/>
            <person name="Cardoso A."/>
            <person name="Almeida W."/>
            <person name="Loureiro M.M."/>
            <person name="Nogueira E."/>
            <person name="Cidade D."/>
            <person name="Oliveira D."/>
            <person name="Simao T."/>
            <person name="Macedo J."/>
            <person name="Valadao A."/>
            <person name="Dreschsel M."/>
            <person name="Freitas F."/>
            <person name="Vidal M."/>
            <person name="Guedes H."/>
            <person name="Rodrigues E."/>
            <person name="Meneses C."/>
            <person name="Brioso P."/>
            <person name="Pozzer L."/>
            <person name="Figueiredo D."/>
            <person name="Montano H."/>
            <person name="Junior J."/>
            <person name="de Souza Filho G."/>
            <person name="Martin Quintana Flores V."/>
            <person name="Ferreira B."/>
            <person name="Branco A."/>
            <person name="Gonzalez P."/>
            <person name="Guillobel H."/>
            <person name="Lemos M."/>
            <person name="Seibel L."/>
            <person name="Macedo J."/>
            <person name="Alves-Ferreira M."/>
            <person name="Sachetto-Martins G."/>
            <person name="Coelho A."/>
            <person name="Santos E."/>
            <person name="Amaral G."/>
            <person name="Neves A."/>
            <person name="Pacheco A.B."/>
            <person name="Carvalho D."/>
            <person name="Lery L."/>
            <person name="Bisch P."/>
            <person name="Rossle S.C."/>
            <person name="Urmenyi T."/>
            <person name="Rael Pereira A."/>
            <person name="Silva R."/>
            <person name="Rondinelli E."/>
            <person name="von Kruger W."/>
            <person name="Martins O."/>
            <person name="Baldani J.I."/>
            <person name="Ferreira P.C."/>
        </authorList>
    </citation>
    <scope>NUCLEOTIDE SEQUENCE [LARGE SCALE GENOMIC DNA]</scope>
    <source>
        <strain>ATCC 49037 / DSM 5601 / CCUG 37298 / CIP 103539 / LMG 7603 / PAl5</strain>
    </source>
</reference>
<reference key="2">
    <citation type="journal article" date="2010" name="Stand. Genomic Sci.">
        <title>Two genome sequences of the same bacterial strain, Gluconacetobacter diazotrophicus PAl 5, suggest a new standard in genome sequence submission.</title>
        <authorList>
            <person name="Giongo A."/>
            <person name="Tyler H.L."/>
            <person name="Zipperer U.N."/>
            <person name="Triplett E.W."/>
        </authorList>
    </citation>
    <scope>NUCLEOTIDE SEQUENCE [LARGE SCALE GENOMIC DNA]</scope>
    <source>
        <strain>ATCC 49037 / DSM 5601 / CCUG 37298 / CIP 103539 / LMG 7603 / PAl5</strain>
    </source>
</reference>